<organism>
    <name type="scientific">Thermofilum pendens (strain DSM 2475 / Hrk 5)</name>
    <dbReference type="NCBI Taxonomy" id="368408"/>
    <lineage>
        <taxon>Archaea</taxon>
        <taxon>Thermoproteota</taxon>
        <taxon>Thermoprotei</taxon>
        <taxon>Thermofilales</taxon>
        <taxon>Thermofilaceae</taxon>
        <taxon>Thermofilum</taxon>
    </lineage>
</organism>
<protein>
    <recommendedName>
        <fullName evidence="1">Alanine--tRNA ligase</fullName>
        <ecNumber evidence="1">6.1.1.7</ecNumber>
    </recommendedName>
    <alternativeName>
        <fullName evidence="1">Alanyl-tRNA synthetase</fullName>
        <shortName evidence="1">AlaRS</shortName>
    </alternativeName>
</protein>
<reference key="1">
    <citation type="journal article" date="2008" name="J. Bacteriol.">
        <title>Genome sequence of Thermofilum pendens reveals an exceptional loss of biosynthetic pathways without genome reduction.</title>
        <authorList>
            <person name="Anderson I."/>
            <person name="Rodriguez J."/>
            <person name="Susanti D."/>
            <person name="Porat I."/>
            <person name="Reich C."/>
            <person name="Ulrich L.E."/>
            <person name="Elkins J.G."/>
            <person name="Mavromatis K."/>
            <person name="Lykidis A."/>
            <person name="Kim E."/>
            <person name="Thompson L.S."/>
            <person name="Nolan M."/>
            <person name="Land M."/>
            <person name="Copeland A."/>
            <person name="Lapidus A."/>
            <person name="Lucas S."/>
            <person name="Detter C."/>
            <person name="Zhulin I.B."/>
            <person name="Olsen G.J."/>
            <person name="Whitman W."/>
            <person name="Mukhopadhyay B."/>
            <person name="Bristow J."/>
            <person name="Kyrpides N."/>
        </authorList>
    </citation>
    <scope>NUCLEOTIDE SEQUENCE [LARGE SCALE GENOMIC DNA]</scope>
    <source>
        <strain>DSM 2475 / Hrk 5</strain>
    </source>
</reference>
<keyword id="KW-0030">Aminoacyl-tRNA synthetase</keyword>
<keyword id="KW-0067">ATP-binding</keyword>
<keyword id="KW-0963">Cytoplasm</keyword>
<keyword id="KW-0436">Ligase</keyword>
<keyword id="KW-0479">Metal-binding</keyword>
<keyword id="KW-0547">Nucleotide-binding</keyword>
<keyword id="KW-0648">Protein biosynthesis</keyword>
<keyword id="KW-1185">Reference proteome</keyword>
<keyword id="KW-0694">RNA-binding</keyword>
<keyword id="KW-0820">tRNA-binding</keyword>
<keyword id="KW-0862">Zinc</keyword>
<feature type="chain" id="PRO_1000074515" description="Alanine--tRNA ligase">
    <location>
        <begin position="1"/>
        <end position="907"/>
    </location>
</feature>
<feature type="binding site" evidence="1">
    <location>
        <position position="602"/>
    </location>
    <ligand>
        <name>Zn(2+)</name>
        <dbReference type="ChEBI" id="CHEBI:29105"/>
    </ligand>
</feature>
<feature type="binding site" evidence="1">
    <location>
        <position position="606"/>
    </location>
    <ligand>
        <name>Zn(2+)</name>
        <dbReference type="ChEBI" id="CHEBI:29105"/>
    </ligand>
</feature>
<feature type="binding site" evidence="1">
    <location>
        <position position="706"/>
    </location>
    <ligand>
        <name>Zn(2+)</name>
        <dbReference type="ChEBI" id="CHEBI:29105"/>
    </ligand>
</feature>
<feature type="binding site" evidence="1">
    <location>
        <position position="710"/>
    </location>
    <ligand>
        <name>Zn(2+)</name>
        <dbReference type="ChEBI" id="CHEBI:29105"/>
    </ligand>
</feature>
<dbReference type="EC" id="6.1.1.7" evidence="1"/>
<dbReference type="EMBL" id="CP000505">
    <property type="protein sequence ID" value="ABL77631.1"/>
    <property type="molecule type" value="Genomic_DNA"/>
</dbReference>
<dbReference type="RefSeq" id="WP_011751896.1">
    <property type="nucleotide sequence ID" value="NC_008698.1"/>
</dbReference>
<dbReference type="SMR" id="A1RWQ1"/>
<dbReference type="STRING" id="368408.Tpen_0221"/>
<dbReference type="EnsemblBacteria" id="ABL77631">
    <property type="protein sequence ID" value="ABL77631"/>
    <property type="gene ID" value="Tpen_0221"/>
</dbReference>
<dbReference type="GeneID" id="4601814"/>
<dbReference type="KEGG" id="tpe:Tpen_0221"/>
<dbReference type="eggNOG" id="arCOG01255">
    <property type="taxonomic scope" value="Archaea"/>
</dbReference>
<dbReference type="HOGENOM" id="CLU_004485_4_0_2"/>
<dbReference type="OrthoDB" id="7506at2157"/>
<dbReference type="Proteomes" id="UP000000641">
    <property type="component" value="Chromosome"/>
</dbReference>
<dbReference type="GO" id="GO:0005737">
    <property type="term" value="C:cytoplasm"/>
    <property type="evidence" value="ECO:0007669"/>
    <property type="project" value="UniProtKB-SubCell"/>
</dbReference>
<dbReference type="GO" id="GO:0004813">
    <property type="term" value="F:alanine-tRNA ligase activity"/>
    <property type="evidence" value="ECO:0007669"/>
    <property type="project" value="UniProtKB-UniRule"/>
</dbReference>
<dbReference type="GO" id="GO:0002161">
    <property type="term" value="F:aminoacyl-tRNA deacylase activity"/>
    <property type="evidence" value="ECO:0007669"/>
    <property type="project" value="UniProtKB-ARBA"/>
</dbReference>
<dbReference type="GO" id="GO:0005524">
    <property type="term" value="F:ATP binding"/>
    <property type="evidence" value="ECO:0007669"/>
    <property type="project" value="UniProtKB-UniRule"/>
</dbReference>
<dbReference type="GO" id="GO:0000049">
    <property type="term" value="F:tRNA binding"/>
    <property type="evidence" value="ECO:0007669"/>
    <property type="project" value="UniProtKB-KW"/>
</dbReference>
<dbReference type="GO" id="GO:0008270">
    <property type="term" value="F:zinc ion binding"/>
    <property type="evidence" value="ECO:0007669"/>
    <property type="project" value="UniProtKB-UniRule"/>
</dbReference>
<dbReference type="GO" id="GO:0006419">
    <property type="term" value="P:alanyl-tRNA aminoacylation"/>
    <property type="evidence" value="ECO:0007669"/>
    <property type="project" value="UniProtKB-UniRule"/>
</dbReference>
<dbReference type="CDD" id="cd00673">
    <property type="entry name" value="AlaRS_core"/>
    <property type="match status" value="1"/>
</dbReference>
<dbReference type="FunFam" id="3.30.54.20:FF:000004">
    <property type="entry name" value="Alanine--tRNA ligase"/>
    <property type="match status" value="1"/>
</dbReference>
<dbReference type="FunFam" id="3.30.930.10:FF:000056">
    <property type="entry name" value="Alanine--tRNA ligase"/>
    <property type="match status" value="1"/>
</dbReference>
<dbReference type="FunFam" id="3.30.980.10:FF:000002">
    <property type="entry name" value="Alanine--tRNA ligase"/>
    <property type="match status" value="1"/>
</dbReference>
<dbReference type="Gene3D" id="2.40.30.130">
    <property type="match status" value="1"/>
</dbReference>
<dbReference type="Gene3D" id="3.10.310.40">
    <property type="match status" value="1"/>
</dbReference>
<dbReference type="Gene3D" id="3.30.54.20">
    <property type="match status" value="1"/>
</dbReference>
<dbReference type="Gene3D" id="6.10.250.550">
    <property type="match status" value="1"/>
</dbReference>
<dbReference type="Gene3D" id="3.30.930.10">
    <property type="entry name" value="Bira Bifunctional Protein, Domain 2"/>
    <property type="match status" value="1"/>
</dbReference>
<dbReference type="Gene3D" id="3.30.980.10">
    <property type="entry name" value="Threonyl-trna Synthetase, Chain A, domain 2"/>
    <property type="match status" value="1"/>
</dbReference>
<dbReference type="HAMAP" id="MF_00036_A">
    <property type="entry name" value="Ala_tRNA_synth_A"/>
    <property type="match status" value="1"/>
</dbReference>
<dbReference type="InterPro" id="IPR045864">
    <property type="entry name" value="aa-tRNA-synth_II/BPL/LPL"/>
</dbReference>
<dbReference type="InterPro" id="IPR002318">
    <property type="entry name" value="Ala-tRNA-lgiase_IIc"/>
</dbReference>
<dbReference type="InterPro" id="IPR018162">
    <property type="entry name" value="Ala-tRNA-ligase_IIc_anticod-bd"/>
</dbReference>
<dbReference type="InterPro" id="IPR018165">
    <property type="entry name" value="Ala-tRNA-synth_IIc_core"/>
</dbReference>
<dbReference type="InterPro" id="IPR018164">
    <property type="entry name" value="Ala-tRNA-synth_IIc_N"/>
</dbReference>
<dbReference type="InterPro" id="IPR022429">
    <property type="entry name" value="Ala-tRNA_lgiase_arc"/>
</dbReference>
<dbReference type="InterPro" id="IPR050058">
    <property type="entry name" value="Ala-tRNA_ligase"/>
</dbReference>
<dbReference type="InterPro" id="IPR018163">
    <property type="entry name" value="Thr/Ala-tRNA-synth_IIc_edit"/>
</dbReference>
<dbReference type="InterPro" id="IPR009000">
    <property type="entry name" value="Transl_B-barrel_sf"/>
</dbReference>
<dbReference type="InterPro" id="IPR012947">
    <property type="entry name" value="tRNA_SAD"/>
</dbReference>
<dbReference type="NCBIfam" id="TIGR03683">
    <property type="entry name" value="A-tRNA_syn_arch"/>
    <property type="match status" value="1"/>
</dbReference>
<dbReference type="NCBIfam" id="TIGR00344">
    <property type="entry name" value="alaS"/>
    <property type="match status" value="1"/>
</dbReference>
<dbReference type="PANTHER" id="PTHR11777:SF9">
    <property type="entry name" value="ALANINE--TRNA LIGASE, CYTOPLASMIC"/>
    <property type="match status" value="1"/>
</dbReference>
<dbReference type="PANTHER" id="PTHR11777">
    <property type="entry name" value="ALANYL-TRNA SYNTHETASE"/>
    <property type="match status" value="1"/>
</dbReference>
<dbReference type="Pfam" id="PF01411">
    <property type="entry name" value="tRNA-synt_2c"/>
    <property type="match status" value="1"/>
</dbReference>
<dbReference type="Pfam" id="PF07973">
    <property type="entry name" value="tRNA_SAD"/>
    <property type="match status" value="1"/>
</dbReference>
<dbReference type="PRINTS" id="PR00980">
    <property type="entry name" value="TRNASYNTHALA"/>
</dbReference>
<dbReference type="SMART" id="SM00863">
    <property type="entry name" value="tRNA_SAD"/>
    <property type="match status" value="1"/>
</dbReference>
<dbReference type="SUPFAM" id="SSF55681">
    <property type="entry name" value="Class II aaRS and biotin synthetases"/>
    <property type="match status" value="1"/>
</dbReference>
<dbReference type="SUPFAM" id="SSF101353">
    <property type="entry name" value="Putative anticodon-binding domain of alanyl-tRNA synthetase (AlaRS)"/>
    <property type="match status" value="1"/>
</dbReference>
<dbReference type="SUPFAM" id="SSF47077">
    <property type="entry name" value="T4 endonuclease V"/>
    <property type="match status" value="1"/>
</dbReference>
<dbReference type="SUPFAM" id="SSF55186">
    <property type="entry name" value="ThrRS/AlaRS common domain"/>
    <property type="match status" value="1"/>
</dbReference>
<dbReference type="SUPFAM" id="SSF50447">
    <property type="entry name" value="Translation proteins"/>
    <property type="match status" value="1"/>
</dbReference>
<dbReference type="PROSITE" id="PS50860">
    <property type="entry name" value="AA_TRNA_LIGASE_II_ALA"/>
    <property type="match status" value="1"/>
</dbReference>
<proteinExistence type="inferred from homology"/>
<accession>A1RWQ1</accession>
<sequence>MSKEDFVNLPFFVENGWIKRTCPVCGRTFWTLDPERKVCGDQPCEEYSFIGRSVGVKPESLSATRKMFIDFFEKRNHTPVKRYPVVARWREDVYLVGASIYDFQPWVTEGLVPPPANPLVISQPSIRLTDLDNVGKTGRHLTGFEMMAHHAFNIRDQRVYWANETVEYAFEVLTKVYGVKPEEITFIFDMWSGGGNAGEDYEVIVRGLEVATLVFMHYKTAEDGSLIPIENRIVDTGYGLERIYWLLTGHYNVYEAVFSGVIDRLRKLSGVEKPPDDLMYRLALKSGRLDFKKPLEALETLRNVSREVGISFEELQRVLEPNEALYALADHTRTIAWMLGDGVVPSNSGAGYLARLLIRRSLRLLRRLQLELPLSEIVLWQIQYWRNDFPEYLELQDEIRDIVDTEEERFEESVKRGEKVLGALLGELKSKGLRVVPAEEIVKLYESHGVPPELVKEKAESEGLEADITGFYSRLAEMRSRAQVQQKEALQLPLDPSRLKEFRPTRLLYYENEKLAEFEATVLGVLDGKYVVLDSTAFYPEGGGQLSDTGVLVYEGGECRVKYAFKVGDIVVHECEGNAPPVGARVKGVVDMERRLALMRHHTATHIVLGALRSVLGKHVWQAGAQKTPDYVRFDFTHHKAITPEQAKAIEALANRVVMEDRPVRKYLLNRTEAEKAFGFTLYQGGAVPQTTLRVVEIPGWDAEACGGTHCDRTGEIGLIKILGFEKIQDGVVRVVFKAGMPALEYVQGMGDKLKNLQEILDASYEGLEEKAKSLKSRIEALEKEVKKLREELLKGGVSVSPVATVQGVQVYVYFSDEYEPREAALAISRTRTSSVILAYNSKGNFALKVTDDLLDRLDAREIGRSVCESLRGKGGGVRDLYQGRIDETKSVDKVIVEALRQALERR</sequence>
<name>SYA_THEPD</name>
<gene>
    <name evidence="1" type="primary">alaS</name>
    <name type="ordered locus">Tpen_0221</name>
</gene>
<evidence type="ECO:0000255" key="1">
    <source>
        <dbReference type="HAMAP-Rule" id="MF_00036"/>
    </source>
</evidence>
<comment type="function">
    <text evidence="1">Catalyzes the attachment of alanine to tRNA(Ala) in a two-step reaction: alanine is first activated by ATP to form Ala-AMP and then transferred to the acceptor end of tRNA(Ala). Also edits incorrectly charged Ser-tRNA(Ala) and Gly-tRNA(Ala) via its editing domain.</text>
</comment>
<comment type="catalytic activity">
    <reaction evidence="1">
        <text>tRNA(Ala) + L-alanine + ATP = L-alanyl-tRNA(Ala) + AMP + diphosphate</text>
        <dbReference type="Rhea" id="RHEA:12540"/>
        <dbReference type="Rhea" id="RHEA-COMP:9657"/>
        <dbReference type="Rhea" id="RHEA-COMP:9923"/>
        <dbReference type="ChEBI" id="CHEBI:30616"/>
        <dbReference type="ChEBI" id="CHEBI:33019"/>
        <dbReference type="ChEBI" id="CHEBI:57972"/>
        <dbReference type="ChEBI" id="CHEBI:78442"/>
        <dbReference type="ChEBI" id="CHEBI:78497"/>
        <dbReference type="ChEBI" id="CHEBI:456215"/>
        <dbReference type="EC" id="6.1.1.7"/>
    </reaction>
</comment>
<comment type="cofactor">
    <cofactor evidence="1">
        <name>Zn(2+)</name>
        <dbReference type="ChEBI" id="CHEBI:29105"/>
    </cofactor>
    <text evidence="1">Binds 1 zinc ion per subunit.</text>
</comment>
<comment type="subcellular location">
    <subcellularLocation>
        <location evidence="1">Cytoplasm</location>
    </subcellularLocation>
</comment>
<comment type="domain">
    <text evidence="1">Consists of three domains; the N-terminal catalytic domain, the editing domain and the C-terminal C-Ala domain. The editing domain removes incorrectly charged amino acids, while the C-Ala domain, along with tRNA(Ala), serves as a bridge to cooperatively bring together the editing and aminoacylation centers thus stimulating deacylation of misacylated tRNAs.</text>
</comment>
<comment type="similarity">
    <text evidence="1">Belongs to the class-II aminoacyl-tRNA synthetase family.</text>
</comment>